<gene>
    <name type="primary">MED29</name>
    <name type="synonym">IXL</name>
</gene>
<sequence>MAASQQQASAASSAAGVSGPSSAGGPGPQQQPQPPAQLVGPAQSGLLQQQQQDFDPVQRYKMLIPQLKESLQTLMKVAAQNLIQNTNIDNGQKSSDGPIQRFDKCLEEFYALCDQLELCLRLAHECLSQSCDSAKHSPTLVPTATKPDAVQPDSLPYPQYLAVIKAQISCAKDIHTALLDCANKVTGKTPAPPAGPGGTL</sequence>
<protein>
    <recommendedName>
        <fullName>Mediator of RNA polymerase II transcription subunit 29</fullName>
    </recommendedName>
    <alternativeName>
        <fullName>Intersex-like protein</fullName>
    </alternativeName>
    <alternativeName>
        <fullName>Mediator complex subunit 29</fullName>
    </alternativeName>
</protein>
<evidence type="ECO:0000250" key="1"/>
<evidence type="ECO:0000250" key="2">
    <source>
        <dbReference type="UniProtKB" id="Q9NX70"/>
    </source>
</evidence>
<evidence type="ECO:0000256" key="3">
    <source>
        <dbReference type="SAM" id="MobiDB-lite"/>
    </source>
</evidence>
<evidence type="ECO:0000305" key="4"/>
<organism>
    <name type="scientific">Pongo abelii</name>
    <name type="common">Sumatran orangutan</name>
    <name type="synonym">Pongo pygmaeus abelii</name>
    <dbReference type="NCBI Taxonomy" id="9601"/>
    <lineage>
        <taxon>Eukaryota</taxon>
        <taxon>Metazoa</taxon>
        <taxon>Chordata</taxon>
        <taxon>Craniata</taxon>
        <taxon>Vertebrata</taxon>
        <taxon>Euteleostomi</taxon>
        <taxon>Mammalia</taxon>
        <taxon>Eutheria</taxon>
        <taxon>Euarchontoglires</taxon>
        <taxon>Primates</taxon>
        <taxon>Haplorrhini</taxon>
        <taxon>Catarrhini</taxon>
        <taxon>Hominidae</taxon>
        <taxon>Pongo</taxon>
    </lineage>
</organism>
<name>MED29_PONAB</name>
<comment type="function">
    <text evidence="1">Component of the Mediator complex, a coactivator involved in the regulated transcription of nearly all RNA polymerase II-dependent genes. Mediator functions as a bridge to convey information from gene-specific regulatory proteins to the basal RNA polymerase II transcription machinery. Mediator is recruited to promoters by direct interactions with regulatory proteins and serves as a scaffold for the assembly of a functional preinitiation complex with RNA polymerase II and the general transcription factors (By similarity).</text>
</comment>
<comment type="subunit">
    <text evidence="1">Component of the Mediator complex, which is composed of MED1, MED4, MED6, MED7, MED8, MED9, MED10, MED11, MED12, MED13, MED13L, MED14, MED15, MED16, MED17, MED18, MED19, MED20, MED21, MED22, MED23, MED24, MED25, MED26, MED27, MED29, MED30, MED31, CCNC, CDK8 and CDC2L6/CDK11. The MED12, MED13, CCNC and CDK8 subunits form a distinct module termed the CDK8 module. Mediator containing the CDK8 module is less active than Mediator lacking this module in supporting transcriptional activation. Individual preparations of the Mediator complex lacking one or more distinct subunits have been variously termed ARC, CRSP, DRIP, PC2, SMCC and TRAP. Associates with the MED18/MED20 heteromer (By similarity).</text>
</comment>
<comment type="subcellular location">
    <subcellularLocation>
        <location evidence="1">Nucleus</location>
    </subcellularLocation>
</comment>
<comment type="similarity">
    <text evidence="4">Belongs to the Mediator complex subunit 29 family.</text>
</comment>
<accession>Q5RBZ4</accession>
<feature type="initiator methionine" description="Removed" evidence="2">
    <location>
        <position position="1"/>
    </location>
</feature>
<feature type="chain" id="PRO_0000288060" description="Mediator of RNA polymerase II transcription subunit 29">
    <location>
        <begin position="2"/>
        <end position="200"/>
    </location>
</feature>
<feature type="region of interest" description="Disordered" evidence="3">
    <location>
        <begin position="1"/>
        <end position="48"/>
    </location>
</feature>
<feature type="compositionally biased region" description="Low complexity" evidence="3">
    <location>
        <begin position="1"/>
        <end position="21"/>
    </location>
</feature>
<feature type="compositionally biased region" description="Low complexity" evidence="3">
    <location>
        <begin position="36"/>
        <end position="48"/>
    </location>
</feature>
<feature type="modified residue" description="N-acetylalanine" evidence="2">
    <location>
        <position position="2"/>
    </location>
</feature>
<proteinExistence type="evidence at transcript level"/>
<reference key="1">
    <citation type="submission" date="2004-11" db="EMBL/GenBank/DDBJ databases">
        <authorList>
            <consortium name="The German cDNA consortium"/>
        </authorList>
    </citation>
    <scope>NUCLEOTIDE SEQUENCE [LARGE SCALE MRNA]</scope>
    <source>
        <tissue>Heart</tissue>
    </source>
</reference>
<dbReference type="EMBL" id="CR858488">
    <property type="protein sequence ID" value="CAH90716.1"/>
    <property type="molecule type" value="mRNA"/>
</dbReference>
<dbReference type="RefSeq" id="NP_001125397.1">
    <property type="nucleotide sequence ID" value="NM_001131925.1"/>
</dbReference>
<dbReference type="SMR" id="Q5RBZ4"/>
<dbReference type="FunCoup" id="Q5RBZ4">
    <property type="interactions" value="2955"/>
</dbReference>
<dbReference type="STRING" id="9601.ENSPPYP00000011155"/>
<dbReference type="GeneID" id="100172302"/>
<dbReference type="KEGG" id="pon:100172302"/>
<dbReference type="CTD" id="55588"/>
<dbReference type="eggNOG" id="ENOG502QRNJ">
    <property type="taxonomic scope" value="Eukaryota"/>
</dbReference>
<dbReference type="InParanoid" id="Q5RBZ4"/>
<dbReference type="OrthoDB" id="6366949at2759"/>
<dbReference type="Proteomes" id="UP000001595">
    <property type="component" value="Unplaced"/>
</dbReference>
<dbReference type="GO" id="GO:0016592">
    <property type="term" value="C:mediator complex"/>
    <property type="evidence" value="ECO:0007669"/>
    <property type="project" value="InterPro"/>
</dbReference>
<dbReference type="GO" id="GO:0003712">
    <property type="term" value="F:transcription coregulator activity"/>
    <property type="evidence" value="ECO:0007669"/>
    <property type="project" value="TreeGrafter"/>
</dbReference>
<dbReference type="GO" id="GO:0006357">
    <property type="term" value="P:regulation of transcription by RNA polymerase II"/>
    <property type="evidence" value="ECO:0007669"/>
    <property type="project" value="TreeGrafter"/>
</dbReference>
<dbReference type="InterPro" id="IPR021018">
    <property type="entry name" value="Mediator_Med29_met"/>
</dbReference>
<dbReference type="PANTHER" id="PTHR28314">
    <property type="entry name" value="MEDIATOR OF RNA POLYMERASE II TRANSCRIPTION SUBUNIT 29"/>
    <property type="match status" value="1"/>
</dbReference>
<dbReference type="PANTHER" id="PTHR28314:SF1">
    <property type="entry name" value="MEDIATOR OF RNA POLYMERASE II TRANSCRIPTION SUBUNIT 29"/>
    <property type="match status" value="1"/>
</dbReference>
<dbReference type="Pfam" id="PF11568">
    <property type="entry name" value="Med29"/>
    <property type="match status" value="1"/>
</dbReference>
<keyword id="KW-0007">Acetylation</keyword>
<keyword id="KW-0010">Activator</keyword>
<keyword id="KW-0539">Nucleus</keyword>
<keyword id="KW-1185">Reference proteome</keyword>
<keyword id="KW-0804">Transcription</keyword>
<keyword id="KW-0805">Transcription regulation</keyword>